<comment type="function">
    <text evidence="4">Component of the chromatin structure remodeling complex (RSC), which is involved in transcription regulation and nucleosome positioning. RSC is responsible for the transfer of a histone octamer from a nucleosome core particle to naked DNA. The reaction requires ATP and involves an activated RSC-nucleosome intermediate. Remodeling reaction also involves DNA translocation, DNA twist and conformational change. As a reconfigurer of centromeric and flanking nucleosomes, RSC complex is required both for proper kinetochore function in chromosome segregation and, via a PKC1-dependent signaling pathway, for organization of the cellular cytoskeleton. Together with HTL1, LDB7, RSC3, RSC30 components, defines a fungal-specific module within the RSC complex that plays a role in many cellular functions including the maintenance of cell wall integrity. Acidic protein important for nuclear protein localization.</text>
</comment>
<comment type="subunit">
    <text evidence="4">Interacts with ARP7, ARP9, RSC3, RSC8, RSC30 and STH1. Component of the two forms of the RSC complex composed of at least either RSC1 or RSC2, and ARP7, ARP9, LDB7, NPL6, RSC3, RSC30, RSC4, RSC58, RSC6, RSC8, RSC9, SFH1, STH1, HTL1 and probably RTT102. The complexes interact with histone and histone variant components of centromeric chromatin. Component of a fungal-specific module (HTL1-LDB7-NPL6-RSC3-RSC30) within the RSC complex.</text>
</comment>
<comment type="interaction">
    <interactant intactId="EBI-12202">
        <id>P32832</id>
    </interactant>
    <interactant intactId="EBI-8659">
        <id>P02829</id>
        <label>HSP82</label>
    </interactant>
    <organismsDiffer>false</organismsDiffer>
    <experiments>2</experiments>
</comment>
<comment type="interaction">
    <interactant intactId="EBI-12202">
        <id>P32832</id>
    </interactant>
    <interactant intactId="EBI-23005">
        <id>P43609</id>
        <label>RSC8</label>
    </interactant>
    <organismsDiffer>false</organismsDiffer>
    <experiments>8</experiments>
</comment>
<comment type="subcellular location">
    <subcellularLocation>
        <location evidence="2">Nucleus</location>
    </subcellularLocation>
</comment>
<comment type="miscellaneous">
    <text evidence="3">Present with 3510 molecules/cell in log phase SD medium.</text>
</comment>
<comment type="similarity">
    <text evidence="5">Belongs to the RSC7/SWP82 family. RSC7 subfamily.</text>
</comment>
<accession>P32832</accession>
<accession>D6VZR4</accession>
<protein>
    <recommendedName>
        <fullName>Chromatin structure-remodeling complex subunit RSC7</fullName>
    </recommendedName>
    <alternativeName>
        <fullName>Nuclear protein localization protein 6</fullName>
    </alternativeName>
    <alternativeName>
        <fullName>Remodel the structure of chromatin complex subunit 7</fullName>
    </alternativeName>
</protein>
<sequence length="435" mass="49651">MSDSEGGLASEVEHEKRSRSTSNRPNYAIDTEDLDIDENDENEDDDYREEEANEGVNEEEISDEEEQINKSGRNKRRHVDEEEDLSEDKGVTRSRNRSKFKKPVFPGIDDAEENLNPLKVVNEEYVLPDDPEGETKITADGDLLGGREFLVRTFTLTEKGNRKFMLATEPARIVGFRDSYLFFQTHPNLYKFILNQTQKNDLIDRGVLPYSYRNRQIALVTARGVFKEFGAKIIRGGKHITDDYYASELRTKGNVIEGKLAGDPIDKSARALETMMYPASENGINPAKNQVEFFEHRPHGHMSNSNIIASGSKLSSTNWLYQHSAACSRFNSDLFYDRVKVLLVDQQGLRDAYTNILHIPESTQSTTVLGWRRSKNDSPSDTSIVYETVIHDNDLNKPKTGLSEIPKEIYEDVVDEDVLRAITEQQNFEKCNEYI</sequence>
<feature type="chain" id="PRO_0000057945" description="Chromatin structure-remodeling complex subunit RSC7">
    <location>
        <begin position="1"/>
        <end position="435"/>
    </location>
</feature>
<feature type="region of interest" description="Disordered" evidence="1">
    <location>
        <begin position="1"/>
        <end position="97"/>
    </location>
</feature>
<feature type="region of interest" description="Functional region; able to complement all NPL6 null allele phenotypes">
    <location>
        <begin position="248"/>
        <end position="435"/>
    </location>
</feature>
<feature type="compositionally biased region" description="Acidic residues" evidence="1">
    <location>
        <begin position="30"/>
        <end position="66"/>
    </location>
</feature>
<feature type="modified residue" description="Phosphoserine" evidence="6">
    <location>
        <position position="86"/>
    </location>
</feature>
<feature type="helix" evidence="8">
    <location>
        <begin position="319"/>
        <end position="342"/>
    </location>
</feature>
<feature type="turn" evidence="8">
    <location>
        <begin position="343"/>
        <end position="345"/>
    </location>
</feature>
<feature type="strand" evidence="8">
    <location>
        <begin position="346"/>
        <end position="351"/>
    </location>
</feature>
<feature type="turn" evidence="8">
    <location>
        <begin position="352"/>
        <end position="355"/>
    </location>
</feature>
<feature type="strand" evidence="8">
    <location>
        <begin position="356"/>
        <end position="360"/>
    </location>
</feature>
<feature type="turn" evidence="8">
    <location>
        <begin position="361"/>
        <end position="363"/>
    </location>
</feature>
<feature type="strand" evidence="8">
    <location>
        <begin position="368"/>
        <end position="373"/>
    </location>
</feature>
<feature type="strand" evidence="7">
    <location>
        <begin position="377"/>
        <end position="380"/>
    </location>
</feature>
<feature type="strand" evidence="8">
    <location>
        <begin position="384"/>
        <end position="391"/>
    </location>
</feature>
<feature type="turn" evidence="8">
    <location>
        <begin position="393"/>
        <end position="396"/>
    </location>
</feature>
<feature type="helix" evidence="8">
    <location>
        <begin position="401"/>
        <end position="403"/>
    </location>
</feature>
<feature type="helix" evidence="8">
    <location>
        <begin position="407"/>
        <end position="410"/>
    </location>
</feature>
<feature type="helix" evidence="8">
    <location>
        <begin position="416"/>
        <end position="432"/>
    </location>
</feature>
<evidence type="ECO:0000256" key="1">
    <source>
        <dbReference type="SAM" id="MobiDB-lite"/>
    </source>
</evidence>
<evidence type="ECO:0000269" key="2">
    <source>
    </source>
</evidence>
<evidence type="ECO:0000269" key="3">
    <source>
    </source>
</evidence>
<evidence type="ECO:0000269" key="4">
    <source>
    </source>
</evidence>
<evidence type="ECO:0000305" key="5"/>
<evidence type="ECO:0007744" key="6">
    <source>
    </source>
</evidence>
<evidence type="ECO:0007829" key="7">
    <source>
        <dbReference type="PDB" id="6K15"/>
    </source>
</evidence>
<evidence type="ECO:0007829" key="8">
    <source>
        <dbReference type="PDB" id="6V8O"/>
    </source>
</evidence>
<name>RSC7_YEAST</name>
<organism>
    <name type="scientific">Saccharomyces cerevisiae (strain ATCC 204508 / S288c)</name>
    <name type="common">Baker's yeast</name>
    <dbReference type="NCBI Taxonomy" id="559292"/>
    <lineage>
        <taxon>Eukaryota</taxon>
        <taxon>Fungi</taxon>
        <taxon>Dikarya</taxon>
        <taxon>Ascomycota</taxon>
        <taxon>Saccharomycotina</taxon>
        <taxon>Saccharomycetes</taxon>
        <taxon>Saccharomycetales</taxon>
        <taxon>Saccharomycetaceae</taxon>
        <taxon>Saccharomyces</taxon>
    </lineage>
</organism>
<proteinExistence type="evidence at protein level"/>
<keyword id="KW-0002">3D-structure</keyword>
<keyword id="KW-0156">Chromatin regulator</keyword>
<keyword id="KW-0539">Nucleus</keyword>
<keyword id="KW-0597">Phosphoprotein</keyword>
<keyword id="KW-1185">Reference proteome</keyword>
<keyword id="KW-0804">Transcription</keyword>
<keyword id="KW-0805">Transcription regulation</keyword>
<gene>
    <name type="primary">NPL6</name>
    <name type="synonym">RSC7</name>
    <name type="ordered locus">YMR091C</name>
    <name type="ORF">YM9582.16C</name>
</gene>
<reference key="1">
    <citation type="submission" date="1992-08" db="EMBL/GenBank/DDBJ databases">
        <title>An acidic protein important for nuclear protein localization.</title>
        <authorList>
            <person name="Chiang A.N."/>
            <person name="Silver P.A."/>
        </authorList>
    </citation>
    <scope>NUCLEOTIDE SEQUENCE [GENOMIC DNA]</scope>
</reference>
<reference key="2">
    <citation type="journal article" date="1997" name="Nature">
        <title>The nucleotide sequence of Saccharomyces cerevisiae chromosome XIII.</title>
        <authorList>
            <person name="Bowman S."/>
            <person name="Churcher C.M."/>
            <person name="Badcock K."/>
            <person name="Brown D."/>
            <person name="Chillingworth T."/>
            <person name="Connor R."/>
            <person name="Dedman K."/>
            <person name="Devlin K."/>
            <person name="Gentles S."/>
            <person name="Hamlin N."/>
            <person name="Hunt S."/>
            <person name="Jagels K."/>
            <person name="Lye G."/>
            <person name="Moule S."/>
            <person name="Odell C."/>
            <person name="Pearson D."/>
            <person name="Rajandream M.A."/>
            <person name="Rice P."/>
            <person name="Skelton J."/>
            <person name="Walsh S.V."/>
            <person name="Whitehead S."/>
            <person name="Barrell B.G."/>
        </authorList>
    </citation>
    <scope>NUCLEOTIDE SEQUENCE [LARGE SCALE GENOMIC DNA]</scope>
    <source>
        <strain>ATCC 204508 / S288c</strain>
    </source>
</reference>
<reference key="3">
    <citation type="journal article" date="2014" name="G3 (Bethesda)">
        <title>The reference genome sequence of Saccharomyces cerevisiae: Then and now.</title>
        <authorList>
            <person name="Engel S.R."/>
            <person name="Dietrich F.S."/>
            <person name="Fisk D.G."/>
            <person name="Binkley G."/>
            <person name="Balakrishnan R."/>
            <person name="Costanzo M.C."/>
            <person name="Dwight S.S."/>
            <person name="Hitz B.C."/>
            <person name="Karra K."/>
            <person name="Nash R.S."/>
            <person name="Weng S."/>
            <person name="Wong E.D."/>
            <person name="Lloyd P."/>
            <person name="Skrzypek M.S."/>
            <person name="Miyasato S.R."/>
            <person name="Simison M."/>
            <person name="Cherry J.M."/>
        </authorList>
    </citation>
    <scope>GENOME REANNOTATION</scope>
    <source>
        <strain>ATCC 204508 / S288c</strain>
    </source>
</reference>
<reference key="4">
    <citation type="journal article" date="2003" name="Nature">
        <title>Global analysis of protein localization in budding yeast.</title>
        <authorList>
            <person name="Huh W.-K."/>
            <person name="Falvo J.V."/>
            <person name="Gerke L.C."/>
            <person name="Carroll A.S."/>
            <person name="Howson R.W."/>
            <person name="Weissman J.S."/>
            <person name="O'Shea E.K."/>
        </authorList>
    </citation>
    <scope>SUBCELLULAR LOCATION [LARGE SCALE ANALYSIS]</scope>
</reference>
<reference key="5">
    <citation type="journal article" date="2003" name="Nature">
        <title>Global analysis of protein expression in yeast.</title>
        <authorList>
            <person name="Ghaemmaghami S."/>
            <person name="Huh W.-K."/>
            <person name="Bower K."/>
            <person name="Howson R.W."/>
            <person name="Belle A."/>
            <person name="Dephoure N."/>
            <person name="O'Shea E.K."/>
            <person name="Weissman J.S."/>
        </authorList>
    </citation>
    <scope>LEVEL OF PROTEIN EXPRESSION [LARGE SCALE ANALYSIS]</scope>
</reference>
<reference key="6">
    <citation type="journal article" date="2006" name="Genetics">
        <title>The RSC chromatin remodeling complex bears an essential fungal-specific protein module with broad functional roles.</title>
        <authorList>
            <person name="Wilson B."/>
            <person name="Erdjument-Bromage H."/>
            <person name="Tempst P."/>
            <person name="Cairns B.R."/>
        </authorList>
    </citation>
    <scope>FUNCTION</scope>
    <scope>IDENTIFICATION IN THE RSC COMPLEX</scope>
    <scope>INTERACTION WITH ARP7; ARP9; RSC3; RSC8; RSC30 AND STH1</scope>
</reference>
<reference key="7">
    <citation type="journal article" date="2007" name="J. Proteome Res.">
        <title>Large-scale phosphorylation analysis of alpha-factor-arrested Saccharomyces cerevisiae.</title>
        <authorList>
            <person name="Li X."/>
            <person name="Gerber S.A."/>
            <person name="Rudner A.D."/>
            <person name="Beausoleil S.A."/>
            <person name="Haas W."/>
            <person name="Villen J."/>
            <person name="Elias J.E."/>
            <person name="Gygi S.P."/>
        </authorList>
    </citation>
    <scope>IDENTIFICATION BY MASS SPECTROMETRY [LARGE SCALE ANALYSIS]</scope>
    <source>
        <strain>ADR376</strain>
    </source>
</reference>
<reference key="8">
    <citation type="journal article" date="2008" name="Mol. Cell. Proteomics">
        <title>A multidimensional chromatography technology for in-depth phosphoproteome analysis.</title>
        <authorList>
            <person name="Albuquerque C.P."/>
            <person name="Smolka M.B."/>
            <person name="Payne S.H."/>
            <person name="Bafna V."/>
            <person name="Eng J."/>
            <person name="Zhou H."/>
        </authorList>
    </citation>
    <scope>PHOSPHORYLATION [LARGE SCALE ANALYSIS] AT SER-86</scope>
    <scope>IDENTIFICATION BY MASS SPECTROMETRY [LARGE SCALE ANALYSIS]</scope>
</reference>
<reference key="9">
    <citation type="journal article" date="2012" name="Proc. Natl. Acad. Sci. U.S.A.">
        <title>N-terminal acetylome analyses and functional insights of the N-terminal acetyltransferase NatB.</title>
        <authorList>
            <person name="Van Damme P."/>
            <person name="Lasa M."/>
            <person name="Polevoda B."/>
            <person name="Gazquez C."/>
            <person name="Elosegui-Artola A."/>
            <person name="Kim D.S."/>
            <person name="De Juan-Pardo E."/>
            <person name="Demeyer K."/>
            <person name="Hole K."/>
            <person name="Larrea E."/>
            <person name="Timmerman E."/>
            <person name="Prieto J."/>
            <person name="Arnesen T."/>
            <person name="Sherman F."/>
            <person name="Gevaert K."/>
            <person name="Aldabe R."/>
        </authorList>
    </citation>
    <scope>IDENTIFICATION BY MASS SPECTROMETRY [LARGE SCALE ANALYSIS]</scope>
</reference>
<dbReference type="EMBL" id="M98434">
    <property type="protein sequence ID" value="AAA34817.1"/>
    <property type="molecule type" value="Genomic_DNA"/>
</dbReference>
<dbReference type="EMBL" id="Z49259">
    <property type="protein sequence ID" value="CAA89238.1"/>
    <property type="molecule type" value="Genomic_DNA"/>
</dbReference>
<dbReference type="EMBL" id="BK006946">
    <property type="protein sequence ID" value="DAA09988.1"/>
    <property type="molecule type" value="Genomic_DNA"/>
</dbReference>
<dbReference type="PIR" id="S30792">
    <property type="entry name" value="S30792"/>
</dbReference>
<dbReference type="RefSeq" id="NP_013809.1">
    <property type="nucleotide sequence ID" value="NM_001182591.1"/>
</dbReference>
<dbReference type="PDB" id="6K15">
    <property type="method" value="EM"/>
    <property type="resolution" value="3.40 A"/>
    <property type="chains" value="F=1-435"/>
</dbReference>
<dbReference type="PDB" id="6KW3">
    <property type="method" value="EM"/>
    <property type="resolution" value="7.13 A"/>
    <property type="chains" value="F=1-435"/>
</dbReference>
<dbReference type="PDB" id="6KW4">
    <property type="method" value="EM"/>
    <property type="resolution" value="7.55 A"/>
    <property type="chains" value="F=1-435"/>
</dbReference>
<dbReference type="PDB" id="6KW5">
    <property type="method" value="EM"/>
    <property type="resolution" value="10.13 A"/>
    <property type="chains" value="F=1-435"/>
</dbReference>
<dbReference type="PDB" id="6TDA">
    <property type="method" value="EM"/>
    <property type="resolution" value="15.00 A"/>
    <property type="chains" value="M=1-435"/>
</dbReference>
<dbReference type="PDB" id="6V8O">
    <property type="method" value="EM"/>
    <property type="resolution" value="3.07 A"/>
    <property type="chains" value="E=1-435"/>
</dbReference>
<dbReference type="PDB" id="6V92">
    <property type="method" value="EM"/>
    <property type="resolution" value="20.00 A"/>
    <property type="chains" value="E=1-435"/>
</dbReference>
<dbReference type="PDBsum" id="6K15"/>
<dbReference type="PDBsum" id="6KW3"/>
<dbReference type="PDBsum" id="6KW4"/>
<dbReference type="PDBsum" id="6KW5"/>
<dbReference type="PDBsum" id="6TDA"/>
<dbReference type="PDBsum" id="6V8O"/>
<dbReference type="PDBsum" id="6V92"/>
<dbReference type="EMDB" id="EMD-0777"/>
<dbReference type="EMDB" id="EMD-0778"/>
<dbReference type="EMDB" id="EMD-0779"/>
<dbReference type="EMDB" id="EMD-10465"/>
<dbReference type="EMDB" id="EMD-21107"/>
<dbReference type="EMDB" id="EMD-21114"/>
<dbReference type="EMDB" id="EMD-9905"/>
<dbReference type="SMR" id="P32832"/>
<dbReference type="BioGRID" id="35266">
    <property type="interactions" value="172"/>
</dbReference>
<dbReference type="ComplexPortal" id="CPX-1888">
    <property type="entry name" value="RSC chromatin remodelling complex, variant RSC2"/>
</dbReference>
<dbReference type="ComplexPortal" id="CPX-1889">
    <property type="entry name" value="RSC chromatin remodelling complex, variant RSC1"/>
</dbReference>
<dbReference type="DIP" id="DIP-1477N"/>
<dbReference type="FunCoup" id="P32832">
    <property type="interactions" value="463"/>
</dbReference>
<dbReference type="IntAct" id="P32832">
    <property type="interactions" value="72"/>
</dbReference>
<dbReference type="MINT" id="P32832"/>
<dbReference type="STRING" id="4932.YMR091C"/>
<dbReference type="iPTMnet" id="P32832"/>
<dbReference type="PaxDb" id="4932-YMR091C"/>
<dbReference type="PeptideAtlas" id="P32832"/>
<dbReference type="EnsemblFungi" id="YMR091C_mRNA">
    <property type="protein sequence ID" value="YMR091C"/>
    <property type="gene ID" value="YMR091C"/>
</dbReference>
<dbReference type="GeneID" id="855116"/>
<dbReference type="KEGG" id="sce:YMR091C"/>
<dbReference type="AGR" id="SGD:S000004697"/>
<dbReference type="SGD" id="S000004697">
    <property type="gene designation" value="NPL6"/>
</dbReference>
<dbReference type="VEuPathDB" id="FungiDB:YMR091C"/>
<dbReference type="eggNOG" id="ENOG502QW07">
    <property type="taxonomic scope" value="Eukaryota"/>
</dbReference>
<dbReference type="GeneTree" id="ENSGT00390000012364"/>
<dbReference type="HOGENOM" id="CLU_022149_1_0_1"/>
<dbReference type="InParanoid" id="P32832"/>
<dbReference type="OMA" id="STNWLYQ"/>
<dbReference type="OrthoDB" id="5598844at2759"/>
<dbReference type="BioCyc" id="YEAST:G3O-32791-MONOMER"/>
<dbReference type="BioGRID-ORCS" id="855116">
    <property type="hits" value="0 hits in 10 CRISPR screens"/>
</dbReference>
<dbReference type="CD-CODE" id="E03F929F">
    <property type="entry name" value="Stress granule"/>
</dbReference>
<dbReference type="PRO" id="PR:P32832"/>
<dbReference type="Proteomes" id="UP000002311">
    <property type="component" value="Chromosome XIII"/>
</dbReference>
<dbReference type="RNAct" id="P32832">
    <property type="molecule type" value="protein"/>
</dbReference>
<dbReference type="GO" id="GO:0000785">
    <property type="term" value="C:chromatin"/>
    <property type="evidence" value="ECO:0000303"/>
    <property type="project" value="ComplexPortal"/>
</dbReference>
<dbReference type="GO" id="GO:0005634">
    <property type="term" value="C:nucleus"/>
    <property type="evidence" value="ECO:0007005"/>
    <property type="project" value="SGD"/>
</dbReference>
<dbReference type="GO" id="GO:0016586">
    <property type="term" value="C:RSC-type complex"/>
    <property type="evidence" value="ECO:0000314"/>
    <property type="project" value="SGD"/>
</dbReference>
<dbReference type="GO" id="GO:0031490">
    <property type="term" value="F:chromatin DNA binding"/>
    <property type="evidence" value="ECO:0000318"/>
    <property type="project" value="GO_Central"/>
</dbReference>
<dbReference type="GO" id="GO:0006338">
    <property type="term" value="P:chromatin remodeling"/>
    <property type="evidence" value="ECO:0000314"/>
    <property type="project" value="SGD"/>
</dbReference>
<dbReference type="GO" id="GO:0006337">
    <property type="term" value="P:nucleosome disassembly"/>
    <property type="evidence" value="ECO:0000314"/>
    <property type="project" value="SGD"/>
</dbReference>
<dbReference type="GO" id="GO:0006368">
    <property type="term" value="P:transcription elongation by RNA polymerase II"/>
    <property type="evidence" value="ECO:0000314"/>
    <property type="project" value="SGD"/>
</dbReference>
<dbReference type="InterPro" id="IPR013933">
    <property type="entry name" value="CRC_Rsc7/Swp82"/>
</dbReference>
<dbReference type="PANTHER" id="PTHR22597:SF3">
    <property type="entry name" value="CHROMATIN STRUCTURE-REMODELING COMPLEX SUBUNIT RSC7"/>
    <property type="match status" value="1"/>
</dbReference>
<dbReference type="PANTHER" id="PTHR22597">
    <property type="entry name" value="POLYCOMB GROUP PROTEIN"/>
    <property type="match status" value="1"/>
</dbReference>
<dbReference type="Pfam" id="PF08624">
    <property type="entry name" value="CRC_subunit"/>
    <property type="match status" value="1"/>
</dbReference>